<keyword id="KW-0012">Acyltransferase</keyword>
<keyword id="KW-0963">Cytoplasm</keyword>
<keyword id="KW-0275">Fatty acid biosynthesis</keyword>
<keyword id="KW-0276">Fatty acid metabolism</keyword>
<keyword id="KW-0444">Lipid biosynthesis</keyword>
<keyword id="KW-0443">Lipid metabolism</keyword>
<keyword id="KW-0511">Multifunctional enzyme</keyword>
<keyword id="KW-1185">Reference proteome</keyword>
<keyword id="KW-0808">Transferase</keyword>
<proteinExistence type="inferred from homology"/>
<feature type="chain" id="PRO_0000110420" description="Beta-ketoacyl-[acyl-carrier-protein] synthase III">
    <location>
        <begin position="1"/>
        <end position="334"/>
    </location>
</feature>
<feature type="region of interest" description="ACP-binding" evidence="1">
    <location>
        <begin position="261"/>
        <end position="265"/>
    </location>
</feature>
<feature type="active site" evidence="1">
    <location>
        <position position="114"/>
    </location>
</feature>
<feature type="active site" evidence="1">
    <location>
        <position position="260"/>
    </location>
</feature>
<feature type="active site" evidence="1">
    <location>
        <position position="290"/>
    </location>
</feature>
<evidence type="ECO:0000255" key="1">
    <source>
        <dbReference type="HAMAP-Rule" id="MF_01815"/>
    </source>
</evidence>
<accession>Q899P3</accession>
<protein>
    <recommendedName>
        <fullName evidence="1">Beta-ketoacyl-[acyl-carrier-protein] synthase III</fullName>
        <shortName evidence="1">Beta-ketoacyl-ACP synthase III</shortName>
        <shortName evidence="1">KAS III</shortName>
        <ecNumber evidence="1">2.3.1.180</ecNumber>
    </recommendedName>
    <alternativeName>
        <fullName evidence="1">3-oxoacyl-[acyl-carrier-protein] synthase 3</fullName>
    </alternativeName>
    <alternativeName>
        <fullName evidence="1">3-oxoacyl-[acyl-carrier-protein] synthase III</fullName>
    </alternativeName>
</protein>
<sequence>MKNKEVRILSTGKYLPPISISNHDLSKIIDTNDNWIKTRTGIEKRRITKGENTSDLGTKAALDALRKGGISPEELDLIIVATITPDYFTPSTACIIQRNIKAYNAFAFDISAACSGFTYGISIASQFIRNGVAKKVLVIGVETLSKLVDWKDRNTCILFGDGSGAAILTESNEKGIMNVYLGSDGRGADLLKCKSSSLTVNSDELKELLNSKEEDLENKFIEMDGKEIFKFAVKVMIKGIEKVLKDSNLELKDINYIIPHQANLRIIEHVAKKLGIDENKFYININHYGNTSAASIPIALAEVDEKGLLKKGDNVILVGFGAGLTWAASLIKWI</sequence>
<dbReference type="EC" id="2.3.1.180" evidence="1"/>
<dbReference type="EMBL" id="AE015927">
    <property type="protein sequence ID" value="AAO34779.1"/>
    <property type="molecule type" value="Genomic_DNA"/>
</dbReference>
<dbReference type="RefSeq" id="WP_011098451.1">
    <property type="nucleotide sequence ID" value="NC_004557.1"/>
</dbReference>
<dbReference type="SMR" id="Q899P3"/>
<dbReference type="STRING" id="212717.CTC_00127"/>
<dbReference type="GeneID" id="24252645"/>
<dbReference type="KEGG" id="ctc:CTC_00127"/>
<dbReference type="HOGENOM" id="CLU_039592_3_1_9"/>
<dbReference type="OrthoDB" id="9815506at2"/>
<dbReference type="UniPathway" id="UPA00094"/>
<dbReference type="Proteomes" id="UP000001412">
    <property type="component" value="Chromosome"/>
</dbReference>
<dbReference type="GO" id="GO:0005737">
    <property type="term" value="C:cytoplasm"/>
    <property type="evidence" value="ECO:0007669"/>
    <property type="project" value="UniProtKB-SubCell"/>
</dbReference>
<dbReference type="GO" id="GO:0004315">
    <property type="term" value="F:3-oxoacyl-[acyl-carrier-protein] synthase activity"/>
    <property type="evidence" value="ECO:0007669"/>
    <property type="project" value="InterPro"/>
</dbReference>
<dbReference type="GO" id="GO:0033818">
    <property type="term" value="F:beta-ketoacyl-acyl-carrier-protein synthase III activity"/>
    <property type="evidence" value="ECO:0007669"/>
    <property type="project" value="UniProtKB-UniRule"/>
</dbReference>
<dbReference type="GO" id="GO:0006633">
    <property type="term" value="P:fatty acid biosynthetic process"/>
    <property type="evidence" value="ECO:0007669"/>
    <property type="project" value="UniProtKB-UniRule"/>
</dbReference>
<dbReference type="CDD" id="cd00830">
    <property type="entry name" value="KAS_III"/>
    <property type="match status" value="1"/>
</dbReference>
<dbReference type="FunFam" id="3.40.47.10:FF:000004">
    <property type="entry name" value="3-oxoacyl-[acyl-carrier-protein] synthase 3"/>
    <property type="match status" value="1"/>
</dbReference>
<dbReference type="Gene3D" id="3.40.47.10">
    <property type="match status" value="1"/>
</dbReference>
<dbReference type="HAMAP" id="MF_01815">
    <property type="entry name" value="FabH"/>
    <property type="match status" value="1"/>
</dbReference>
<dbReference type="InterPro" id="IPR013747">
    <property type="entry name" value="ACP_syn_III_C"/>
</dbReference>
<dbReference type="InterPro" id="IPR013751">
    <property type="entry name" value="ACP_syn_III_N"/>
</dbReference>
<dbReference type="InterPro" id="IPR004655">
    <property type="entry name" value="FabH"/>
</dbReference>
<dbReference type="InterPro" id="IPR016039">
    <property type="entry name" value="Thiolase-like"/>
</dbReference>
<dbReference type="NCBIfam" id="TIGR00747">
    <property type="entry name" value="fabH"/>
    <property type="match status" value="1"/>
</dbReference>
<dbReference type="NCBIfam" id="NF006829">
    <property type="entry name" value="PRK09352.1"/>
    <property type="match status" value="1"/>
</dbReference>
<dbReference type="PANTHER" id="PTHR43091">
    <property type="entry name" value="3-OXOACYL-[ACYL-CARRIER-PROTEIN] SYNTHASE"/>
    <property type="match status" value="1"/>
</dbReference>
<dbReference type="PANTHER" id="PTHR43091:SF1">
    <property type="entry name" value="BETA-KETOACYL-[ACYL-CARRIER-PROTEIN] SYNTHASE III, CHLOROPLASTIC"/>
    <property type="match status" value="1"/>
</dbReference>
<dbReference type="Pfam" id="PF08545">
    <property type="entry name" value="ACP_syn_III"/>
    <property type="match status" value="1"/>
</dbReference>
<dbReference type="Pfam" id="PF08541">
    <property type="entry name" value="ACP_syn_III_C"/>
    <property type="match status" value="1"/>
</dbReference>
<dbReference type="SUPFAM" id="SSF53901">
    <property type="entry name" value="Thiolase-like"/>
    <property type="match status" value="1"/>
</dbReference>
<organism>
    <name type="scientific">Clostridium tetani (strain Massachusetts / E88)</name>
    <dbReference type="NCBI Taxonomy" id="212717"/>
    <lineage>
        <taxon>Bacteria</taxon>
        <taxon>Bacillati</taxon>
        <taxon>Bacillota</taxon>
        <taxon>Clostridia</taxon>
        <taxon>Eubacteriales</taxon>
        <taxon>Clostridiaceae</taxon>
        <taxon>Clostridium</taxon>
    </lineage>
</organism>
<comment type="function">
    <text evidence="1">Catalyzes the condensation reaction of fatty acid synthesis by the addition to an acyl acceptor of two carbons from malonyl-ACP. Catalyzes the first condensation reaction which initiates fatty acid synthesis and may therefore play a role in governing the total rate of fatty acid production. Possesses both acetoacetyl-ACP synthase and acetyl transacylase activities. Its substrate specificity determines the biosynthesis of branched-chain and/or straight-chain of fatty acids.</text>
</comment>
<comment type="catalytic activity">
    <reaction evidence="1">
        <text>malonyl-[ACP] + acetyl-CoA + H(+) = 3-oxobutanoyl-[ACP] + CO2 + CoA</text>
        <dbReference type="Rhea" id="RHEA:12080"/>
        <dbReference type="Rhea" id="RHEA-COMP:9623"/>
        <dbReference type="Rhea" id="RHEA-COMP:9625"/>
        <dbReference type="ChEBI" id="CHEBI:15378"/>
        <dbReference type="ChEBI" id="CHEBI:16526"/>
        <dbReference type="ChEBI" id="CHEBI:57287"/>
        <dbReference type="ChEBI" id="CHEBI:57288"/>
        <dbReference type="ChEBI" id="CHEBI:78449"/>
        <dbReference type="ChEBI" id="CHEBI:78450"/>
        <dbReference type="EC" id="2.3.1.180"/>
    </reaction>
</comment>
<comment type="pathway">
    <text evidence="1">Lipid metabolism; fatty acid biosynthesis.</text>
</comment>
<comment type="subunit">
    <text evidence="1">Homodimer.</text>
</comment>
<comment type="subcellular location">
    <subcellularLocation>
        <location evidence="1">Cytoplasm</location>
    </subcellularLocation>
</comment>
<comment type="domain">
    <text evidence="1">The last Arg residue of the ACP-binding site is essential for the weak association between ACP/AcpP and FabH.</text>
</comment>
<comment type="similarity">
    <text evidence="1">Belongs to the thiolase-like superfamily. FabH family.</text>
</comment>
<gene>
    <name evidence="1" type="primary">fabH</name>
    <name type="ordered locus">CTC_00127</name>
</gene>
<reference key="1">
    <citation type="journal article" date="2003" name="Proc. Natl. Acad. Sci. U.S.A.">
        <title>The genome sequence of Clostridium tetani, the causative agent of tetanus disease.</title>
        <authorList>
            <person name="Brueggemann H."/>
            <person name="Baeumer S."/>
            <person name="Fricke W.F."/>
            <person name="Wiezer A."/>
            <person name="Liesegang H."/>
            <person name="Decker I."/>
            <person name="Herzberg C."/>
            <person name="Martinez-Arias R."/>
            <person name="Merkl R."/>
            <person name="Henne A."/>
            <person name="Gottschalk G."/>
        </authorList>
    </citation>
    <scope>NUCLEOTIDE SEQUENCE [LARGE SCALE GENOMIC DNA]</scope>
    <source>
        <strain>Massachusetts / E88</strain>
    </source>
</reference>
<name>FABH_CLOTE</name>